<proteinExistence type="evidence at transcript level"/>
<gene>
    <name type="primary">Ccdc32</name>
    <name type="synonym">Gm631</name>
</gene>
<dbReference type="EMBL" id="AK040670">
    <property type="protein sequence ID" value="BAC30662.1"/>
    <property type="molecule type" value="mRNA"/>
</dbReference>
<dbReference type="EMBL" id="AL772264">
    <property type="status" value="NOT_ANNOTATED_CDS"/>
    <property type="molecule type" value="Genomic_DNA"/>
</dbReference>
<dbReference type="EMBL" id="AL845164">
    <property type="status" value="NOT_ANNOTATED_CDS"/>
    <property type="molecule type" value="Genomic_DNA"/>
</dbReference>
<dbReference type="EMBL" id="BC023926">
    <property type="protein sequence ID" value="AAH23926.2"/>
    <property type="status" value="ALT_INIT"/>
    <property type="molecule type" value="mRNA"/>
</dbReference>
<dbReference type="CCDS" id="CCDS50671.1">
    <molecule id="Q8BS39-1"/>
</dbReference>
<dbReference type="FunCoup" id="Q8BS39">
    <property type="interactions" value="71"/>
</dbReference>
<dbReference type="STRING" id="10090.ENSMUSP00000038589"/>
<dbReference type="PhosphoSitePlus" id="Q8BS39"/>
<dbReference type="PaxDb" id="10090-ENSMUSP00000038589"/>
<dbReference type="ProteomicsDB" id="281417">
    <molecule id="Q8BS39-1"/>
</dbReference>
<dbReference type="ProteomicsDB" id="281418">
    <molecule id="Q8BS39-2"/>
</dbReference>
<dbReference type="Antibodypedia" id="52306">
    <property type="antibodies" value="33 antibodies from 9 providers"/>
</dbReference>
<dbReference type="Ensembl" id="ENSMUST00000110833.2">
    <molecule id="Q8BS39-2"/>
    <property type="protein sequence ID" value="ENSMUSP00000106457.2"/>
    <property type="gene ID" value="ENSMUSG00000039983.14"/>
</dbReference>
<dbReference type="Ensembl" id="ENSMUST00000110834.8">
    <molecule id="Q8BS39-2"/>
    <property type="protein sequence ID" value="ENSMUSP00000106458.2"/>
    <property type="gene ID" value="ENSMUSG00000039983.14"/>
</dbReference>
<dbReference type="UCSC" id="uc008lsy.1">
    <molecule id="Q8BS39-1"/>
    <property type="organism name" value="mouse"/>
</dbReference>
<dbReference type="AGR" id="MGI:2685477"/>
<dbReference type="MGI" id="MGI:2685477">
    <property type="gene designation" value="Ccdc32"/>
</dbReference>
<dbReference type="VEuPathDB" id="HostDB:ENSMUSG00000039983"/>
<dbReference type="eggNOG" id="KOG4106">
    <property type="taxonomic scope" value="Eukaryota"/>
</dbReference>
<dbReference type="GeneTree" id="ENSGT00390000014780"/>
<dbReference type="InParanoid" id="Q8BS39"/>
<dbReference type="PhylomeDB" id="Q8BS39"/>
<dbReference type="ChiTaRS" id="Ccdc32">
    <property type="organism name" value="mouse"/>
</dbReference>
<dbReference type="PRO" id="PR:Q8BS39"/>
<dbReference type="Proteomes" id="UP000000589">
    <property type="component" value="Chromosome 2"/>
</dbReference>
<dbReference type="RNAct" id="Q8BS39">
    <property type="molecule type" value="protein"/>
</dbReference>
<dbReference type="Bgee" id="ENSMUSG00000039983">
    <property type="expression patterns" value="Expressed in CA1 field of hippocampus and 219 other cell types or tissues"/>
</dbReference>
<dbReference type="ExpressionAtlas" id="Q8BS39">
    <property type="expression patterns" value="baseline and differential"/>
</dbReference>
<dbReference type="GO" id="GO:0005905">
    <property type="term" value="C:clathrin-coated pit"/>
    <property type="evidence" value="ECO:0000250"/>
    <property type="project" value="UniProtKB"/>
</dbReference>
<dbReference type="GO" id="GO:0044782">
    <property type="term" value="P:cilium organization"/>
    <property type="evidence" value="ECO:0000315"/>
    <property type="project" value="UniProtKB"/>
</dbReference>
<dbReference type="GO" id="GO:2000369">
    <property type="term" value="P:regulation of clathrin-dependent endocytosis"/>
    <property type="evidence" value="ECO:0000250"/>
    <property type="project" value="UniProtKB"/>
</dbReference>
<dbReference type="InterPro" id="IPR028039">
    <property type="entry name" value="CCDC32"/>
</dbReference>
<dbReference type="PANTHER" id="PTHR31800">
    <property type="entry name" value="COILED-COIL DOMAIN-CONTAINING PROTEIN 32"/>
    <property type="match status" value="1"/>
</dbReference>
<dbReference type="PANTHER" id="PTHR31800:SF1">
    <property type="entry name" value="COILED-COIL DOMAIN-CONTAINING PROTEIN 32"/>
    <property type="match status" value="1"/>
</dbReference>
<dbReference type="Pfam" id="PF14989">
    <property type="entry name" value="CCDC32"/>
    <property type="match status" value="1"/>
</dbReference>
<accession>Q8BS39</accession>
<accession>Q5U667</accession>
<accession>Q7TPZ0</accession>
<feature type="chain" id="PRO_0000298938" description="Coiled-coil domain-containing protein 32">
    <location>
        <begin position="1"/>
        <end position="179"/>
    </location>
</feature>
<feature type="region of interest" description="Disordered" evidence="4">
    <location>
        <begin position="36"/>
        <end position="65"/>
    </location>
</feature>
<feature type="region of interest" description="Disordered" evidence="4">
    <location>
        <begin position="158"/>
        <end position="179"/>
    </location>
</feature>
<feature type="coiled-coil region" evidence="3">
    <location>
        <begin position="75"/>
        <end position="98"/>
    </location>
</feature>
<feature type="splice variant" id="VSP_027488" description="In isoform 2." evidence="6">
    <location>
        <begin position="135"/>
        <end position="179"/>
    </location>
</feature>
<feature type="sequence conflict" description="In Ref. 3; AAH23926." evidence="7" ref="3">
    <original>R</original>
    <variation>S</variation>
    <location>
        <position position="134"/>
    </location>
</feature>
<sequence length="179" mass="19928">MKMFESLDSSATKSGRDLWAEICSCLPSPAQEDVSDNAFSDSFMDSHPAGESHTAAADSAVQPAGKPWAPLHDSEVYLASLEKKLRRIKGLNEEVTSKDMLRTLAQAKKECWDRFLQEKLASEFFVDGLDSDERTLEHFKRWLQPDKVAISTEEVQFLIPPESQAEKPEAGDKPAAAEQ</sequence>
<reference key="1">
    <citation type="journal article" date="2005" name="Science">
        <title>The transcriptional landscape of the mammalian genome.</title>
        <authorList>
            <person name="Carninci P."/>
            <person name="Kasukawa T."/>
            <person name="Katayama S."/>
            <person name="Gough J."/>
            <person name="Frith M.C."/>
            <person name="Maeda N."/>
            <person name="Oyama R."/>
            <person name="Ravasi T."/>
            <person name="Lenhard B."/>
            <person name="Wells C."/>
            <person name="Kodzius R."/>
            <person name="Shimokawa K."/>
            <person name="Bajic V.B."/>
            <person name="Brenner S.E."/>
            <person name="Batalov S."/>
            <person name="Forrest A.R."/>
            <person name="Zavolan M."/>
            <person name="Davis M.J."/>
            <person name="Wilming L.G."/>
            <person name="Aidinis V."/>
            <person name="Allen J.E."/>
            <person name="Ambesi-Impiombato A."/>
            <person name="Apweiler R."/>
            <person name="Aturaliya R.N."/>
            <person name="Bailey T.L."/>
            <person name="Bansal M."/>
            <person name="Baxter L."/>
            <person name="Beisel K.W."/>
            <person name="Bersano T."/>
            <person name="Bono H."/>
            <person name="Chalk A.M."/>
            <person name="Chiu K.P."/>
            <person name="Choudhary V."/>
            <person name="Christoffels A."/>
            <person name="Clutterbuck D.R."/>
            <person name="Crowe M.L."/>
            <person name="Dalla E."/>
            <person name="Dalrymple B.P."/>
            <person name="de Bono B."/>
            <person name="Della Gatta G."/>
            <person name="di Bernardo D."/>
            <person name="Down T."/>
            <person name="Engstrom P."/>
            <person name="Fagiolini M."/>
            <person name="Faulkner G."/>
            <person name="Fletcher C.F."/>
            <person name="Fukushima T."/>
            <person name="Furuno M."/>
            <person name="Futaki S."/>
            <person name="Gariboldi M."/>
            <person name="Georgii-Hemming P."/>
            <person name="Gingeras T.R."/>
            <person name="Gojobori T."/>
            <person name="Green R.E."/>
            <person name="Gustincich S."/>
            <person name="Harbers M."/>
            <person name="Hayashi Y."/>
            <person name="Hensch T.K."/>
            <person name="Hirokawa N."/>
            <person name="Hill D."/>
            <person name="Huminiecki L."/>
            <person name="Iacono M."/>
            <person name="Ikeo K."/>
            <person name="Iwama A."/>
            <person name="Ishikawa T."/>
            <person name="Jakt M."/>
            <person name="Kanapin A."/>
            <person name="Katoh M."/>
            <person name="Kawasawa Y."/>
            <person name="Kelso J."/>
            <person name="Kitamura H."/>
            <person name="Kitano H."/>
            <person name="Kollias G."/>
            <person name="Krishnan S.P."/>
            <person name="Kruger A."/>
            <person name="Kummerfeld S.K."/>
            <person name="Kurochkin I.V."/>
            <person name="Lareau L.F."/>
            <person name="Lazarevic D."/>
            <person name="Lipovich L."/>
            <person name="Liu J."/>
            <person name="Liuni S."/>
            <person name="McWilliam S."/>
            <person name="Madan Babu M."/>
            <person name="Madera M."/>
            <person name="Marchionni L."/>
            <person name="Matsuda H."/>
            <person name="Matsuzawa S."/>
            <person name="Miki H."/>
            <person name="Mignone F."/>
            <person name="Miyake S."/>
            <person name="Morris K."/>
            <person name="Mottagui-Tabar S."/>
            <person name="Mulder N."/>
            <person name="Nakano N."/>
            <person name="Nakauchi H."/>
            <person name="Ng P."/>
            <person name="Nilsson R."/>
            <person name="Nishiguchi S."/>
            <person name="Nishikawa S."/>
            <person name="Nori F."/>
            <person name="Ohara O."/>
            <person name="Okazaki Y."/>
            <person name="Orlando V."/>
            <person name="Pang K.C."/>
            <person name="Pavan W.J."/>
            <person name="Pavesi G."/>
            <person name="Pesole G."/>
            <person name="Petrovsky N."/>
            <person name="Piazza S."/>
            <person name="Reed J."/>
            <person name="Reid J.F."/>
            <person name="Ring B.Z."/>
            <person name="Ringwald M."/>
            <person name="Rost B."/>
            <person name="Ruan Y."/>
            <person name="Salzberg S.L."/>
            <person name="Sandelin A."/>
            <person name="Schneider C."/>
            <person name="Schoenbach C."/>
            <person name="Sekiguchi K."/>
            <person name="Semple C.A."/>
            <person name="Seno S."/>
            <person name="Sessa L."/>
            <person name="Sheng Y."/>
            <person name="Shibata Y."/>
            <person name="Shimada H."/>
            <person name="Shimada K."/>
            <person name="Silva D."/>
            <person name="Sinclair B."/>
            <person name="Sperling S."/>
            <person name="Stupka E."/>
            <person name="Sugiura K."/>
            <person name="Sultana R."/>
            <person name="Takenaka Y."/>
            <person name="Taki K."/>
            <person name="Tammoja K."/>
            <person name="Tan S.L."/>
            <person name="Tang S."/>
            <person name="Taylor M.S."/>
            <person name="Tegner J."/>
            <person name="Teichmann S.A."/>
            <person name="Ueda H.R."/>
            <person name="van Nimwegen E."/>
            <person name="Verardo R."/>
            <person name="Wei C.L."/>
            <person name="Yagi K."/>
            <person name="Yamanishi H."/>
            <person name="Zabarovsky E."/>
            <person name="Zhu S."/>
            <person name="Zimmer A."/>
            <person name="Hide W."/>
            <person name="Bult C."/>
            <person name="Grimmond S.M."/>
            <person name="Teasdale R.D."/>
            <person name="Liu E.T."/>
            <person name="Brusic V."/>
            <person name="Quackenbush J."/>
            <person name="Wahlestedt C."/>
            <person name="Mattick J.S."/>
            <person name="Hume D.A."/>
            <person name="Kai C."/>
            <person name="Sasaki D."/>
            <person name="Tomaru Y."/>
            <person name="Fukuda S."/>
            <person name="Kanamori-Katayama M."/>
            <person name="Suzuki M."/>
            <person name="Aoki J."/>
            <person name="Arakawa T."/>
            <person name="Iida J."/>
            <person name="Imamura K."/>
            <person name="Itoh M."/>
            <person name="Kato T."/>
            <person name="Kawaji H."/>
            <person name="Kawagashira N."/>
            <person name="Kawashima T."/>
            <person name="Kojima M."/>
            <person name="Kondo S."/>
            <person name="Konno H."/>
            <person name="Nakano K."/>
            <person name="Ninomiya N."/>
            <person name="Nishio T."/>
            <person name="Okada M."/>
            <person name="Plessy C."/>
            <person name="Shibata K."/>
            <person name="Shiraki T."/>
            <person name="Suzuki S."/>
            <person name="Tagami M."/>
            <person name="Waki K."/>
            <person name="Watahiki A."/>
            <person name="Okamura-Oho Y."/>
            <person name="Suzuki H."/>
            <person name="Kawai J."/>
            <person name="Hayashizaki Y."/>
        </authorList>
    </citation>
    <scope>NUCLEOTIDE SEQUENCE [LARGE SCALE MRNA] (ISOFORM 2)</scope>
    <source>
        <strain>C57BL/6J</strain>
        <tissue>Aorta</tissue>
        <tissue>Vein</tissue>
    </source>
</reference>
<reference key="2">
    <citation type="journal article" date="2009" name="PLoS Biol.">
        <title>Lineage-specific biology revealed by a finished genome assembly of the mouse.</title>
        <authorList>
            <person name="Church D.M."/>
            <person name="Goodstadt L."/>
            <person name="Hillier L.W."/>
            <person name="Zody M.C."/>
            <person name="Goldstein S."/>
            <person name="She X."/>
            <person name="Bult C.J."/>
            <person name="Agarwala R."/>
            <person name="Cherry J.L."/>
            <person name="DiCuccio M."/>
            <person name="Hlavina W."/>
            <person name="Kapustin Y."/>
            <person name="Meric P."/>
            <person name="Maglott D."/>
            <person name="Birtle Z."/>
            <person name="Marques A.C."/>
            <person name="Graves T."/>
            <person name="Zhou S."/>
            <person name="Teague B."/>
            <person name="Potamousis K."/>
            <person name="Churas C."/>
            <person name="Place M."/>
            <person name="Herschleb J."/>
            <person name="Runnheim R."/>
            <person name="Forrest D."/>
            <person name="Amos-Landgraf J."/>
            <person name="Schwartz D.C."/>
            <person name="Cheng Z."/>
            <person name="Lindblad-Toh K."/>
            <person name="Eichler E.E."/>
            <person name="Ponting C.P."/>
        </authorList>
    </citation>
    <scope>NUCLEOTIDE SEQUENCE [LARGE SCALE GENOMIC DNA]</scope>
    <source>
        <strain>C57BL/6J</strain>
    </source>
</reference>
<reference key="3">
    <citation type="journal article" date="2004" name="Genome Res.">
        <title>The status, quality, and expansion of the NIH full-length cDNA project: the Mammalian Gene Collection (MGC).</title>
        <authorList>
            <consortium name="The MGC Project Team"/>
        </authorList>
    </citation>
    <scope>NUCLEOTIDE SEQUENCE [LARGE SCALE MRNA] (ISOFORM 1)</scope>
    <source>
        <strain>FVB/N</strain>
        <tissue>Mammary tumor</tissue>
    </source>
</reference>
<reference key="4">
    <citation type="journal article" date="2020" name="Hum. Mol. Genet.">
        <title>Loss of function mutations in CCDC32 cause a congenital syndrome characterized by craniofacial, cardiac and neurodevelopmental anomalies.</title>
        <authorList>
            <person name="Harel T."/>
            <person name="Griffin J.N."/>
            <person name="Arbogast T."/>
            <person name="Monroe T.O."/>
            <person name="Palombo F."/>
            <person name="Martinelli M."/>
            <person name="Seri M."/>
            <person name="Pippucci T."/>
            <person name="Elpeleg O."/>
            <person name="Katsanis N."/>
        </authorList>
    </citation>
    <scope>FUNCTION</scope>
</reference>
<comment type="function">
    <text evidence="1 2 5">Regulates clathrin-mediated endocytsois of cargos such as transferrin probably through the association and modulation of adaptor protein complex 2 (AP-2) (By similarity). Has a role in ciliogenesis (PubMed:32307552). Required for proper cephalic and left/right axis development (By similarity).</text>
</comment>
<comment type="subunit">
    <text evidence="1">Interacts with AP2S1; the interaction is direct and mediates association with adaptor protein complex 2 (AP-2).</text>
</comment>
<comment type="subcellular location">
    <subcellularLocation>
        <location evidence="1">Membrane</location>
        <location evidence="1">Coated pit</location>
        <topology evidence="1">Peripheral membrane protein</topology>
        <orientation evidence="1">Cytoplasmic side</orientation>
    </subcellularLocation>
</comment>
<comment type="alternative products">
    <event type="alternative splicing"/>
    <isoform>
        <id>Q8BS39-1</id>
        <name>1</name>
        <sequence type="displayed"/>
    </isoform>
    <isoform>
        <id>Q8BS39-2</id>
        <name>2</name>
        <sequence type="described" ref="VSP_027488"/>
    </isoform>
</comment>
<comment type="sequence caution" evidence="7">
    <conflict type="erroneous initiation">
        <sequence resource="EMBL-CDS" id="AAH23926"/>
    </conflict>
    <text>Truncated N-terminus.</text>
</comment>
<keyword id="KW-0025">Alternative splicing</keyword>
<keyword id="KW-0970">Cilium biogenesis/degradation</keyword>
<keyword id="KW-0168">Coated pit</keyword>
<keyword id="KW-0175">Coiled coil</keyword>
<keyword id="KW-0472">Membrane</keyword>
<keyword id="KW-1185">Reference proteome</keyword>
<name>CCD32_MOUSE</name>
<evidence type="ECO:0000250" key="1">
    <source>
        <dbReference type="UniProtKB" id="Q9BV29"/>
    </source>
</evidence>
<evidence type="ECO:0000250" key="2">
    <source>
        <dbReference type="UniProtKB" id="X1WGV5"/>
    </source>
</evidence>
<evidence type="ECO:0000255" key="3"/>
<evidence type="ECO:0000256" key="4">
    <source>
        <dbReference type="SAM" id="MobiDB-lite"/>
    </source>
</evidence>
<evidence type="ECO:0000269" key="5">
    <source>
    </source>
</evidence>
<evidence type="ECO:0000303" key="6">
    <source>
    </source>
</evidence>
<evidence type="ECO:0000305" key="7"/>
<protein>
    <recommendedName>
        <fullName>Coiled-coil domain-containing protein 32</fullName>
    </recommendedName>
</protein>
<organism>
    <name type="scientific">Mus musculus</name>
    <name type="common">Mouse</name>
    <dbReference type="NCBI Taxonomy" id="10090"/>
    <lineage>
        <taxon>Eukaryota</taxon>
        <taxon>Metazoa</taxon>
        <taxon>Chordata</taxon>
        <taxon>Craniata</taxon>
        <taxon>Vertebrata</taxon>
        <taxon>Euteleostomi</taxon>
        <taxon>Mammalia</taxon>
        <taxon>Eutheria</taxon>
        <taxon>Euarchontoglires</taxon>
        <taxon>Glires</taxon>
        <taxon>Rodentia</taxon>
        <taxon>Myomorpha</taxon>
        <taxon>Muroidea</taxon>
        <taxon>Muridae</taxon>
        <taxon>Murinae</taxon>
        <taxon>Mus</taxon>
        <taxon>Mus</taxon>
    </lineage>
</organism>